<sequence length="499" mass="55458">MATSKAPKERLKNYKYRGKEMSLPRQQRIASSLQLRKTRKDEQVLKRRNIDLFSSDMVSQALVKEVNFTLDDIIQAVNSSDPILHFRATRAAREMISQENTPPLNLIIEAGLIPKLVDFLKATPHPKLQFEAAWVLTNIASGTSEQTRAVVKEGAIQPLIELLCSPHLTVSEQAVWALGNIAGDCAEFRDCVISNNAIPHLINLISKGIPITFLRNISWTLSNLCRNKDPYPSESAVRQMLPPLCQLLLHRDNEILADTCWALSYLTKGGKEYIHHVVTTGILPRLVELMTSSELSISIPCLHTIGNIVAGTDEQTQMAIDAGMLKVLGQVLKHPKTSIQVLAAWTMSNVAAGPRHQVEQLLCNLLPILVDLLRNAELKVQKEVVCTVINIATGASQDQLTLLAHSGILEPMLSLLSAPDLEVVIIVLDIISYLLQHIDNLQEKKRLYFQIEKFGGFEKIECLQHHHNISISNSALDIIEKYFCEDGDGDSLPGPGLRV</sequence>
<protein>
    <recommendedName>
        <fullName>Importin subunit alpha-8</fullName>
    </recommendedName>
    <alternativeName>
        <fullName>Karyopherin subunit alpha-7</fullName>
    </alternativeName>
</protein>
<proteinExistence type="evidence at protein level"/>
<keyword id="KW-0025">Alternative splicing</keyword>
<keyword id="KW-0539">Nucleus</keyword>
<keyword id="KW-0653">Protein transport</keyword>
<keyword id="KW-1185">Reference proteome</keyword>
<keyword id="KW-0677">Repeat</keyword>
<keyword id="KW-0813">Transport</keyword>
<comment type="function">
    <text evidence="1">Functions in nuclear protein import.</text>
</comment>
<comment type="subunit">
    <text evidence="1">Binds to importin subunit beta-1/KPNB1 via the IBB domain; this complex dissociates in the presence of RAN-GTP. Shows a limited binding to the RB1 nuclear localization signal (NLS), but not to the SV40, nor NPM1 NLSs. Interacts with RSL1D1.</text>
</comment>
<comment type="subcellular location">
    <subcellularLocation>
        <location evidence="3">Nucleus</location>
    </subcellularLocation>
    <text>In MII-stage oocytes, localizes to the spindle.</text>
</comment>
<comment type="alternative products">
    <event type="alternative splicing"/>
    <isoform>
        <id>C0LLJ0-1</id>
        <name>1</name>
        <sequence type="displayed"/>
    </isoform>
    <isoform>
        <id>C0LLJ0-2</id>
        <name>2</name>
        <sequence type="described" ref="VSP_041924"/>
    </isoform>
</comment>
<comment type="tissue specificity">
    <text evidence="3">Expressed predominantly in ovary. Isoform 1 is the predominant form.</text>
</comment>
<comment type="developmental stage">
    <text evidence="3">Expressed at high levels in germinal vesicle-stage oocytes, as well as in zygotes and 2-cell embryos (at protein level). Drastically down-regulated after the 2-cell stage.</text>
</comment>
<comment type="disruption phenotype">
    <text evidence="3">Mutant mice exhibit abnormal preimplantation development. About half of the mutant embryos fail to develop into the blastocyst stage, or are delayed. Lethality is greater among female than among male embryos.</text>
</comment>
<comment type="similarity">
    <text evidence="6">Belongs to the importin alpha family.</text>
</comment>
<accession>C0LLJ0</accession>
<accession>C0LLJ1</accession>
<accession>Q3UWY3</accession>
<accession>Q58HC5</accession>
<feature type="chain" id="PRO_0000413537" description="Importin subunit alpha-8">
    <location>
        <begin position="1"/>
        <end position="499"/>
    </location>
</feature>
<feature type="domain" description="IBB" evidence="2">
    <location>
        <begin position="1"/>
        <end position="57"/>
    </location>
</feature>
<feature type="repeat" description="ARM 1">
    <location>
        <begin position="101"/>
        <end position="141"/>
    </location>
</feature>
<feature type="repeat" description="ARM 2">
    <location>
        <begin position="144"/>
        <end position="183"/>
    </location>
</feature>
<feature type="repeat" description="ARM 3">
    <location>
        <begin position="186"/>
        <end position="226"/>
    </location>
</feature>
<feature type="repeat" description="ARM 4">
    <location>
        <begin position="229"/>
        <end position="268"/>
    </location>
</feature>
<feature type="repeat" description="ARM 5">
    <location>
        <begin position="271"/>
        <end position="310"/>
    </location>
</feature>
<feature type="repeat" description="ARM 6">
    <location>
        <begin position="313"/>
        <end position="352"/>
    </location>
</feature>
<feature type="repeat" description="ARM 7">
    <location>
        <begin position="354"/>
        <end position="393"/>
    </location>
</feature>
<feature type="repeat" description="ARM 8">
    <location>
        <begin position="397"/>
        <end position="436"/>
    </location>
</feature>
<feature type="splice variant" id="VSP_041924" description="In isoform 2." evidence="4 5">
    <original>A</original>
    <variation>ADRKMPDTQVQIFTPSTREAKA</variation>
    <location>
        <position position="182"/>
    </location>
</feature>
<feature type="sequence conflict" description="In Ref. 1; ACN85342 and 2; AAX50192." evidence="6" ref="1 2">
    <original>E</original>
    <variation>D</variation>
    <location>
        <position position="161"/>
    </location>
</feature>
<organism>
    <name type="scientific">Mus musculus</name>
    <name type="common">Mouse</name>
    <dbReference type="NCBI Taxonomy" id="10090"/>
    <lineage>
        <taxon>Eukaryota</taxon>
        <taxon>Metazoa</taxon>
        <taxon>Chordata</taxon>
        <taxon>Craniata</taxon>
        <taxon>Vertebrata</taxon>
        <taxon>Euteleostomi</taxon>
        <taxon>Mammalia</taxon>
        <taxon>Eutheria</taxon>
        <taxon>Euarchontoglires</taxon>
        <taxon>Glires</taxon>
        <taxon>Rodentia</taxon>
        <taxon>Myomorpha</taxon>
        <taxon>Muroidea</taxon>
        <taxon>Muridae</taxon>
        <taxon>Murinae</taxon>
        <taxon>Mus</taxon>
        <taxon>Mus</taxon>
    </lineage>
</organism>
<reference key="1">
    <citation type="journal article" date="2010" name="J. Biol. Chem.">
        <title>Novel importin-alpha family member Kpna7 is required for normal fertility and fecundity in the mouse.</title>
        <authorList>
            <person name="Hu J."/>
            <person name="Wang F."/>
            <person name="Yuan Y."/>
            <person name="Zhu X."/>
            <person name="Wang Y."/>
            <person name="Zhang Y."/>
            <person name="Kou Z."/>
            <person name="Wang S."/>
            <person name="Gao S."/>
        </authorList>
    </citation>
    <scope>NUCLEOTIDE SEQUENCE [MRNA] (ISOFORMS 1 AND 2)</scope>
    <scope>SUBCELLULAR LOCATION</scope>
    <scope>INTERACTION WITH KPNB1</scope>
    <scope>TISSUE SPECIFICITY</scope>
    <scope>DEVELOPMENTAL STAGE</scope>
    <scope>DISRUPTION PHENOTYPE</scope>
    <source>
        <strain>C57BL/6J</strain>
        <tissue>Ovary</tissue>
    </source>
</reference>
<reference key="2">
    <citation type="submission" date="2005-03" db="EMBL/GenBank/DDBJ databases">
        <authorList>
            <person name="Hartmann E."/>
        </authorList>
    </citation>
    <scope>NUCLEOTIDE SEQUENCE [MRNA] (ISOFORM 1)</scope>
</reference>
<reference key="3">
    <citation type="journal article" date="2009" name="PLoS Biol.">
        <title>Lineage-specific biology revealed by a finished genome assembly of the mouse.</title>
        <authorList>
            <person name="Church D.M."/>
            <person name="Goodstadt L."/>
            <person name="Hillier L.W."/>
            <person name="Zody M.C."/>
            <person name="Goldstein S."/>
            <person name="She X."/>
            <person name="Bult C.J."/>
            <person name="Agarwala R."/>
            <person name="Cherry J.L."/>
            <person name="DiCuccio M."/>
            <person name="Hlavina W."/>
            <person name="Kapustin Y."/>
            <person name="Meric P."/>
            <person name="Maglott D."/>
            <person name="Birtle Z."/>
            <person name="Marques A.C."/>
            <person name="Graves T."/>
            <person name="Zhou S."/>
            <person name="Teague B."/>
            <person name="Potamousis K."/>
            <person name="Churas C."/>
            <person name="Place M."/>
            <person name="Herschleb J."/>
            <person name="Runnheim R."/>
            <person name="Forrest D."/>
            <person name="Amos-Landgraf J."/>
            <person name="Schwartz D.C."/>
            <person name="Cheng Z."/>
            <person name="Lindblad-Toh K."/>
            <person name="Eichler E.E."/>
            <person name="Ponting C.P."/>
        </authorList>
    </citation>
    <scope>NUCLEOTIDE SEQUENCE [LARGE SCALE GENOMIC DNA]</scope>
    <source>
        <strain>C57BL/6J</strain>
    </source>
</reference>
<reference key="4">
    <citation type="submission" date="2005-09" db="EMBL/GenBank/DDBJ databases">
        <authorList>
            <person name="Mural R.J."/>
            <person name="Adams M.D."/>
            <person name="Myers E.W."/>
            <person name="Smith H.O."/>
            <person name="Venter J.C."/>
        </authorList>
    </citation>
    <scope>NUCLEOTIDE SEQUENCE [LARGE SCALE GENOMIC DNA]</scope>
</reference>
<reference key="5">
    <citation type="journal article" date="2005" name="Science">
        <title>The transcriptional landscape of the mammalian genome.</title>
        <authorList>
            <person name="Carninci P."/>
            <person name="Kasukawa T."/>
            <person name="Katayama S."/>
            <person name="Gough J."/>
            <person name="Frith M.C."/>
            <person name="Maeda N."/>
            <person name="Oyama R."/>
            <person name="Ravasi T."/>
            <person name="Lenhard B."/>
            <person name="Wells C."/>
            <person name="Kodzius R."/>
            <person name="Shimokawa K."/>
            <person name="Bajic V.B."/>
            <person name="Brenner S.E."/>
            <person name="Batalov S."/>
            <person name="Forrest A.R."/>
            <person name="Zavolan M."/>
            <person name="Davis M.J."/>
            <person name="Wilming L.G."/>
            <person name="Aidinis V."/>
            <person name="Allen J.E."/>
            <person name="Ambesi-Impiombato A."/>
            <person name="Apweiler R."/>
            <person name="Aturaliya R.N."/>
            <person name="Bailey T.L."/>
            <person name="Bansal M."/>
            <person name="Baxter L."/>
            <person name="Beisel K.W."/>
            <person name="Bersano T."/>
            <person name="Bono H."/>
            <person name="Chalk A.M."/>
            <person name="Chiu K.P."/>
            <person name="Choudhary V."/>
            <person name="Christoffels A."/>
            <person name="Clutterbuck D.R."/>
            <person name="Crowe M.L."/>
            <person name="Dalla E."/>
            <person name="Dalrymple B.P."/>
            <person name="de Bono B."/>
            <person name="Della Gatta G."/>
            <person name="di Bernardo D."/>
            <person name="Down T."/>
            <person name="Engstrom P."/>
            <person name="Fagiolini M."/>
            <person name="Faulkner G."/>
            <person name="Fletcher C.F."/>
            <person name="Fukushima T."/>
            <person name="Furuno M."/>
            <person name="Futaki S."/>
            <person name="Gariboldi M."/>
            <person name="Georgii-Hemming P."/>
            <person name="Gingeras T.R."/>
            <person name="Gojobori T."/>
            <person name="Green R.E."/>
            <person name="Gustincich S."/>
            <person name="Harbers M."/>
            <person name="Hayashi Y."/>
            <person name="Hensch T.K."/>
            <person name="Hirokawa N."/>
            <person name="Hill D."/>
            <person name="Huminiecki L."/>
            <person name="Iacono M."/>
            <person name="Ikeo K."/>
            <person name="Iwama A."/>
            <person name="Ishikawa T."/>
            <person name="Jakt M."/>
            <person name="Kanapin A."/>
            <person name="Katoh M."/>
            <person name="Kawasawa Y."/>
            <person name="Kelso J."/>
            <person name="Kitamura H."/>
            <person name="Kitano H."/>
            <person name="Kollias G."/>
            <person name="Krishnan S.P."/>
            <person name="Kruger A."/>
            <person name="Kummerfeld S.K."/>
            <person name="Kurochkin I.V."/>
            <person name="Lareau L.F."/>
            <person name="Lazarevic D."/>
            <person name="Lipovich L."/>
            <person name="Liu J."/>
            <person name="Liuni S."/>
            <person name="McWilliam S."/>
            <person name="Madan Babu M."/>
            <person name="Madera M."/>
            <person name="Marchionni L."/>
            <person name="Matsuda H."/>
            <person name="Matsuzawa S."/>
            <person name="Miki H."/>
            <person name="Mignone F."/>
            <person name="Miyake S."/>
            <person name="Morris K."/>
            <person name="Mottagui-Tabar S."/>
            <person name="Mulder N."/>
            <person name="Nakano N."/>
            <person name="Nakauchi H."/>
            <person name="Ng P."/>
            <person name="Nilsson R."/>
            <person name="Nishiguchi S."/>
            <person name="Nishikawa S."/>
            <person name="Nori F."/>
            <person name="Ohara O."/>
            <person name="Okazaki Y."/>
            <person name="Orlando V."/>
            <person name="Pang K.C."/>
            <person name="Pavan W.J."/>
            <person name="Pavesi G."/>
            <person name="Pesole G."/>
            <person name="Petrovsky N."/>
            <person name="Piazza S."/>
            <person name="Reed J."/>
            <person name="Reid J.F."/>
            <person name="Ring B.Z."/>
            <person name="Ringwald M."/>
            <person name="Rost B."/>
            <person name="Ruan Y."/>
            <person name="Salzberg S.L."/>
            <person name="Sandelin A."/>
            <person name="Schneider C."/>
            <person name="Schoenbach C."/>
            <person name="Sekiguchi K."/>
            <person name="Semple C.A."/>
            <person name="Seno S."/>
            <person name="Sessa L."/>
            <person name="Sheng Y."/>
            <person name="Shibata Y."/>
            <person name="Shimada H."/>
            <person name="Shimada K."/>
            <person name="Silva D."/>
            <person name="Sinclair B."/>
            <person name="Sperling S."/>
            <person name="Stupka E."/>
            <person name="Sugiura K."/>
            <person name="Sultana R."/>
            <person name="Takenaka Y."/>
            <person name="Taki K."/>
            <person name="Tammoja K."/>
            <person name="Tan S.L."/>
            <person name="Tang S."/>
            <person name="Taylor M.S."/>
            <person name="Tegner J."/>
            <person name="Teichmann S.A."/>
            <person name="Ueda H.R."/>
            <person name="van Nimwegen E."/>
            <person name="Verardo R."/>
            <person name="Wei C.L."/>
            <person name="Yagi K."/>
            <person name="Yamanishi H."/>
            <person name="Zabarovsky E."/>
            <person name="Zhu S."/>
            <person name="Zimmer A."/>
            <person name="Hide W."/>
            <person name="Bult C."/>
            <person name="Grimmond S.M."/>
            <person name="Teasdale R.D."/>
            <person name="Liu E.T."/>
            <person name="Brusic V."/>
            <person name="Quackenbush J."/>
            <person name="Wahlestedt C."/>
            <person name="Mattick J.S."/>
            <person name="Hume D.A."/>
            <person name="Kai C."/>
            <person name="Sasaki D."/>
            <person name="Tomaru Y."/>
            <person name="Fukuda S."/>
            <person name="Kanamori-Katayama M."/>
            <person name="Suzuki M."/>
            <person name="Aoki J."/>
            <person name="Arakawa T."/>
            <person name="Iida J."/>
            <person name="Imamura K."/>
            <person name="Itoh M."/>
            <person name="Kato T."/>
            <person name="Kawaji H."/>
            <person name="Kawagashira N."/>
            <person name="Kawashima T."/>
            <person name="Kojima M."/>
            <person name="Kondo S."/>
            <person name="Konno H."/>
            <person name="Nakano K."/>
            <person name="Ninomiya N."/>
            <person name="Nishio T."/>
            <person name="Okada M."/>
            <person name="Plessy C."/>
            <person name="Shibata K."/>
            <person name="Shiraki T."/>
            <person name="Suzuki S."/>
            <person name="Tagami M."/>
            <person name="Waki K."/>
            <person name="Watahiki A."/>
            <person name="Okamura-Oho Y."/>
            <person name="Suzuki H."/>
            <person name="Kawai J."/>
            <person name="Hayashizaki Y."/>
        </authorList>
    </citation>
    <scope>NUCLEOTIDE SEQUENCE [LARGE SCALE MRNA] OF 105-499 (ISOFORM 2)</scope>
    <source>
        <tissue>Embryo</tissue>
    </source>
</reference>
<evidence type="ECO:0000250" key="1">
    <source>
        <dbReference type="UniProtKB" id="A9QM74"/>
    </source>
</evidence>
<evidence type="ECO:0000255" key="2">
    <source>
        <dbReference type="PROSITE-ProRule" id="PRU00561"/>
    </source>
</evidence>
<evidence type="ECO:0000269" key="3">
    <source>
    </source>
</evidence>
<evidence type="ECO:0000303" key="4">
    <source>
    </source>
</evidence>
<evidence type="ECO:0000303" key="5">
    <source>
    </source>
</evidence>
<evidence type="ECO:0000305" key="6"/>
<dbReference type="EMBL" id="FJ717332">
    <property type="protein sequence ID" value="ACN85341.1"/>
    <property type="molecule type" value="mRNA"/>
</dbReference>
<dbReference type="EMBL" id="FJ717333">
    <property type="protein sequence ID" value="ACN85342.1"/>
    <property type="molecule type" value="mRNA"/>
</dbReference>
<dbReference type="EMBL" id="AY950703">
    <property type="protein sequence ID" value="AAX50192.1"/>
    <property type="molecule type" value="mRNA"/>
</dbReference>
<dbReference type="EMBL" id="AC110556">
    <property type="status" value="NOT_ANNOTATED_CDS"/>
    <property type="molecule type" value="Genomic_DNA"/>
</dbReference>
<dbReference type="EMBL" id="AC113295">
    <property type="status" value="NOT_ANNOTATED_CDS"/>
    <property type="molecule type" value="Genomic_DNA"/>
</dbReference>
<dbReference type="EMBL" id="CH466529">
    <property type="protein sequence ID" value="EDL19009.1"/>
    <property type="molecule type" value="Genomic_DNA"/>
</dbReference>
<dbReference type="EMBL" id="AK136027">
    <property type="protein sequence ID" value="BAE22781.1"/>
    <property type="molecule type" value="mRNA"/>
</dbReference>
<dbReference type="CCDS" id="CCDS19852.1">
    <molecule id="C0LLJ0-1"/>
</dbReference>
<dbReference type="CCDS" id="CCDS84996.1">
    <molecule id="C0LLJ0-2"/>
</dbReference>
<dbReference type="RefSeq" id="NP_001013796.2">
    <molecule id="C0LLJ0-1"/>
    <property type="nucleotide sequence ID" value="NM_001013774.2"/>
</dbReference>
<dbReference type="RefSeq" id="NP_001334460.1">
    <molecule id="C0LLJ0-2"/>
    <property type="nucleotide sequence ID" value="NM_001347531.1"/>
</dbReference>
<dbReference type="RefSeq" id="XP_017176433.1">
    <property type="nucleotide sequence ID" value="XM_017320944.1"/>
</dbReference>
<dbReference type="SMR" id="C0LLJ0"/>
<dbReference type="ComplexPortal" id="CPX-1067">
    <property type="entry name" value="Importin complex, KPNA7 variant"/>
</dbReference>
<dbReference type="FunCoup" id="C0LLJ0">
    <property type="interactions" value="122"/>
</dbReference>
<dbReference type="STRING" id="10090.ENSMUSP00000106301"/>
<dbReference type="iPTMnet" id="C0LLJ0"/>
<dbReference type="PhosphoSitePlus" id="C0LLJ0"/>
<dbReference type="PeptideAtlas" id="C0LLJ0"/>
<dbReference type="ProteomicsDB" id="267242">
    <molecule id="C0LLJ0-1"/>
</dbReference>
<dbReference type="ProteomicsDB" id="267243">
    <molecule id="C0LLJ0-2"/>
</dbReference>
<dbReference type="Antibodypedia" id="30296">
    <property type="antibodies" value="43 antibodies from 20 providers"/>
</dbReference>
<dbReference type="DNASU" id="381686"/>
<dbReference type="Ensembl" id="ENSMUST00000110672.8">
    <molecule id="C0LLJ0-1"/>
    <property type="protein sequence ID" value="ENSMUSP00000106300.2"/>
    <property type="gene ID" value="ENSMUSG00000038770.18"/>
</dbReference>
<dbReference type="Ensembl" id="ENSMUST00000110673.8">
    <molecule id="C0LLJ0-2"/>
    <property type="protein sequence ID" value="ENSMUSP00000106301.2"/>
    <property type="gene ID" value="ENSMUSG00000038770.18"/>
</dbReference>
<dbReference type="Ensembl" id="ENSMUST00000116454.10">
    <molecule id="C0LLJ0-1"/>
    <property type="protein sequence ID" value="ENSMUSP00000112155.4"/>
    <property type="gene ID" value="ENSMUSG00000038770.18"/>
</dbReference>
<dbReference type="GeneID" id="381686"/>
<dbReference type="KEGG" id="mmu:381686"/>
<dbReference type="UCSC" id="uc009alx.1">
    <molecule id="C0LLJ0-2"/>
    <property type="organism name" value="mouse"/>
</dbReference>
<dbReference type="UCSC" id="uc009aly.1">
    <molecule id="C0LLJ0-1"/>
    <property type="organism name" value="mouse"/>
</dbReference>
<dbReference type="AGR" id="MGI:2141165"/>
<dbReference type="CTD" id="402569"/>
<dbReference type="MGI" id="MGI:2141165">
    <property type="gene designation" value="Kpna7"/>
</dbReference>
<dbReference type="VEuPathDB" id="HostDB:ENSMUSG00000038770"/>
<dbReference type="eggNOG" id="KOG0166">
    <property type="taxonomic scope" value="Eukaryota"/>
</dbReference>
<dbReference type="GeneTree" id="ENSGT01050000244891"/>
<dbReference type="HOGENOM" id="CLU_018084_6_1_1"/>
<dbReference type="InParanoid" id="C0LLJ0"/>
<dbReference type="OMA" id="HENRQIG"/>
<dbReference type="OrthoDB" id="69935at9989"/>
<dbReference type="PhylomeDB" id="C0LLJ0"/>
<dbReference type="TreeFam" id="TF101178"/>
<dbReference type="BioGRID-ORCS" id="381686">
    <property type="hits" value="2 hits in 62 CRISPR screens"/>
</dbReference>
<dbReference type="ChiTaRS" id="Kpna7">
    <property type="organism name" value="mouse"/>
</dbReference>
<dbReference type="PRO" id="PR:C0LLJ0"/>
<dbReference type="Proteomes" id="UP000000589">
    <property type="component" value="Chromosome 5"/>
</dbReference>
<dbReference type="RNAct" id="C0LLJ0">
    <property type="molecule type" value="protein"/>
</dbReference>
<dbReference type="Bgee" id="ENSMUSG00000038770">
    <property type="expression patterns" value="Expressed in animal zygote and 21 other cell types or tissues"/>
</dbReference>
<dbReference type="ExpressionAtlas" id="C0LLJ0">
    <property type="expression patterns" value="baseline and differential"/>
</dbReference>
<dbReference type="GO" id="GO:0005829">
    <property type="term" value="C:cytosol"/>
    <property type="evidence" value="ECO:0000303"/>
    <property type="project" value="ComplexPortal"/>
</dbReference>
<dbReference type="GO" id="GO:0001674">
    <property type="term" value="C:female germ cell nucleus"/>
    <property type="evidence" value="ECO:0000314"/>
    <property type="project" value="MGI"/>
</dbReference>
<dbReference type="GO" id="GO:0042564">
    <property type="term" value="C:NLS-dependent protein nuclear import complex"/>
    <property type="evidence" value="ECO:0000266"/>
    <property type="project" value="ComplexPortal"/>
</dbReference>
<dbReference type="GO" id="GO:0005654">
    <property type="term" value="C:nucleoplasm"/>
    <property type="evidence" value="ECO:0000303"/>
    <property type="project" value="ComplexPortal"/>
</dbReference>
<dbReference type="GO" id="GO:0005634">
    <property type="term" value="C:nucleus"/>
    <property type="evidence" value="ECO:0000314"/>
    <property type="project" value="MGI"/>
</dbReference>
<dbReference type="GO" id="GO:0005819">
    <property type="term" value="C:spindle"/>
    <property type="evidence" value="ECO:0000314"/>
    <property type="project" value="MGI"/>
</dbReference>
<dbReference type="GO" id="GO:0061608">
    <property type="term" value="F:nuclear import signal receptor activity"/>
    <property type="evidence" value="ECO:0007669"/>
    <property type="project" value="InterPro"/>
</dbReference>
<dbReference type="GO" id="GO:0001824">
    <property type="term" value="P:blastocyst development"/>
    <property type="evidence" value="ECO:0000315"/>
    <property type="project" value="MGI"/>
</dbReference>
<dbReference type="GO" id="GO:0040029">
    <property type="term" value="P:epigenetic regulation of gene expression"/>
    <property type="evidence" value="ECO:0000315"/>
    <property type="project" value="MGI"/>
</dbReference>
<dbReference type="GO" id="GO:0010629">
    <property type="term" value="P:negative regulation of gene expression"/>
    <property type="evidence" value="ECO:0000315"/>
    <property type="project" value="MGI"/>
</dbReference>
<dbReference type="GO" id="GO:0010628">
    <property type="term" value="P:positive regulation of gene expression"/>
    <property type="evidence" value="ECO:0000315"/>
    <property type="project" value="MGI"/>
</dbReference>
<dbReference type="GO" id="GO:0006606">
    <property type="term" value="P:protein import into nucleus"/>
    <property type="evidence" value="ECO:0000250"/>
    <property type="project" value="ComplexPortal"/>
</dbReference>
<dbReference type="FunFam" id="1.25.10.10:FF:000009">
    <property type="entry name" value="Importin subunit alpha"/>
    <property type="match status" value="1"/>
</dbReference>
<dbReference type="Gene3D" id="1.20.5.690">
    <property type="entry name" value="Importin-alpha, importin-beta-binding domain"/>
    <property type="match status" value="1"/>
</dbReference>
<dbReference type="Gene3D" id="1.25.10.10">
    <property type="entry name" value="Leucine-rich Repeat Variant"/>
    <property type="match status" value="1"/>
</dbReference>
<dbReference type="InterPro" id="IPR011989">
    <property type="entry name" value="ARM-like"/>
</dbReference>
<dbReference type="InterPro" id="IPR016024">
    <property type="entry name" value="ARM-type_fold"/>
</dbReference>
<dbReference type="InterPro" id="IPR032413">
    <property type="entry name" value="Arm_3"/>
</dbReference>
<dbReference type="InterPro" id="IPR000225">
    <property type="entry name" value="Armadillo"/>
</dbReference>
<dbReference type="InterPro" id="IPR002652">
    <property type="entry name" value="Importin-a_IBB"/>
</dbReference>
<dbReference type="InterPro" id="IPR036975">
    <property type="entry name" value="Importin-a_IBB_sf"/>
</dbReference>
<dbReference type="InterPro" id="IPR024931">
    <property type="entry name" value="Importin_alpha"/>
</dbReference>
<dbReference type="PANTHER" id="PTHR23316">
    <property type="entry name" value="IMPORTIN ALPHA"/>
    <property type="match status" value="1"/>
</dbReference>
<dbReference type="Pfam" id="PF00514">
    <property type="entry name" value="Arm"/>
    <property type="match status" value="5"/>
</dbReference>
<dbReference type="Pfam" id="PF16186">
    <property type="entry name" value="Arm_3"/>
    <property type="match status" value="1"/>
</dbReference>
<dbReference type="Pfam" id="PF01749">
    <property type="entry name" value="IBB"/>
    <property type="match status" value="1"/>
</dbReference>
<dbReference type="PIRSF" id="PIRSF005673">
    <property type="entry name" value="Importin_alpha"/>
    <property type="match status" value="1"/>
</dbReference>
<dbReference type="SMART" id="SM00185">
    <property type="entry name" value="ARM"/>
    <property type="match status" value="8"/>
</dbReference>
<dbReference type="SUPFAM" id="SSF48371">
    <property type="entry name" value="ARM repeat"/>
    <property type="match status" value="1"/>
</dbReference>
<dbReference type="PROSITE" id="PS50176">
    <property type="entry name" value="ARM_REPEAT"/>
    <property type="match status" value="2"/>
</dbReference>
<dbReference type="PROSITE" id="PS51214">
    <property type="entry name" value="IBB"/>
    <property type="match status" value="1"/>
</dbReference>
<name>IMA8_MOUSE</name>
<gene>
    <name type="primary">Kpna7</name>
</gene>